<comment type="catalytic activity">
    <reaction>
        <text>Endohydrolysis of (1-&gt;4)-beta-D-xylosidic linkages in xylans.</text>
        <dbReference type="EC" id="3.2.1.8"/>
    </reaction>
</comment>
<comment type="biophysicochemical properties">
    <phDependence>
        <text>Optimum pH is 6.2.</text>
    </phDependence>
    <temperatureDependence>
        <text>Optimum temperature is 90 degrees Celsius. Thermostable.</text>
    </temperatureDependence>
</comment>
<comment type="domain">
    <text>The C-terminal CBM-CenC domains mediate the binding of XynA to microcrystalline cellulose. CBM-CenC 2 alone can also promote cellulose binding.</text>
</comment>
<comment type="similarity">
    <text evidence="5">Belongs to the glycosyl hydrolase 10 (cellulase F) family.</text>
</comment>
<keyword id="KW-0002">3D-structure</keyword>
<keyword id="KW-0119">Carbohydrate metabolism</keyword>
<keyword id="KW-0326">Glycosidase</keyword>
<keyword id="KW-0378">Hydrolase</keyword>
<keyword id="KW-0624">Polysaccharide degradation</keyword>
<keyword id="KW-1185">Reference proteome</keyword>
<keyword id="KW-0677">Repeat</keyword>
<keyword id="KW-0732">Signal</keyword>
<keyword id="KW-0858">Xylan degradation</keyword>
<sequence length="1059" mass="119643">MQVRKRRGLLDVSTAVLVGILAGFLGVVLAASGVLSFGKEASSKGDSSLETVLALSFEGTTEGVVPFGKDVVLTASQDVAADGEYSLKVENRTSPWDGVEIDLTGKVKSGADYLLSFQVYQSSDAPQLFNVVARTEDEKGERYDVILDKVVVSDHWKEILVPFSPTFEGTPAKYSLIIVASKNTNFNFYLDKVQVLAPKESGPKVIYETSFENGVGDWQPRGDVNIEASSEVAHSGKSSLFISNRQKGWQGAQINLKGILKTGKTYAFEAWVYQNSGQDQTIIMTMQRKYSSDASTQYEWIKSATVPSGQWVQLSGTYTIPAGVTVEDLTLYFESQNPTLEFYVDDVKIVDTTSAEIKIEMEPEKEIPALKEVLKDYFKVGVALPSKVFLNPKDIELITKHFNSITAENEMKPESLLAGIENGKLKFRFETADKYIQFVEENGMVIRGHTLVWHNQTPDWFFKDENGNLLSKEAMTERLKEYIHTVVGHFKGKVYAWDVVNEAVDPNQPDGLRRSTWYQIMGPDYIELAFKFAREADPDAKLFYNDYNTFEPRKRDIIYNLVKDLKEKGLIDGIGMQCHISLATDIKQIEEAIKKFSTIPGIEIHITELDMSVYRDSSSNYPEAPRTALIEQAHKMMQLFEIFKKYSNVITNVTFWGLKDDYSWRATRRNDWPLIFDKDHQAKLAYWAIVAPEVLPPLPKESRISEGEAVVVGMMDDSYLMSKPIEILDEEGNVKATIRAVWKDSTIYIYGEVQDKTKKPAEDGVAIFINPNNERTPYLQPDDTYAVLWTNWKTEVNREDVQVKKFVGPGFRRYSFEMSITIPGVEFKKDSYIGFDAAVIDDGKWYSWSDTTNSQKTNTMNYGTLKLEGIMVATAKYGTPVIDGEIDEIWNTTEEIETKAVAMGSLDKNATAKVRVLWDENYLYVLAIVKDPVLNKDNSNPWEQDSVEIFIDENNHKTGYYEDDDAQFRVNYMNEQTFGTGGSPARFKTAVKLIEGGYIVEAAIKWKTIKPTPNTVIGFNIQVNDANEKGQRVGIISWSDPTNNSWRDPSKFGNLRLIK</sequence>
<organism>
    <name type="scientific">Thermotoga maritima (strain ATCC 43589 / DSM 3109 / JCM 10099 / NBRC 100826 / MSB8)</name>
    <dbReference type="NCBI Taxonomy" id="243274"/>
    <lineage>
        <taxon>Bacteria</taxon>
        <taxon>Thermotogati</taxon>
        <taxon>Thermotogota</taxon>
        <taxon>Thermotogae</taxon>
        <taxon>Thermotogales</taxon>
        <taxon>Thermotogaceae</taxon>
        <taxon>Thermotoga</taxon>
    </lineage>
</organism>
<evidence type="ECO:0000250" key="1"/>
<evidence type="ECO:0000255" key="2"/>
<evidence type="ECO:0000255" key="3">
    <source>
        <dbReference type="PROSITE-ProRule" id="PRU01096"/>
    </source>
</evidence>
<evidence type="ECO:0000255" key="4">
    <source>
        <dbReference type="PROSITE-ProRule" id="PRU10061"/>
    </source>
</evidence>
<evidence type="ECO:0000305" key="5"/>
<evidence type="ECO:0007829" key="6">
    <source>
        <dbReference type="PDB" id="1I82"/>
    </source>
</evidence>
<name>XYNA_THEMA</name>
<feature type="signal peptide" evidence="2">
    <location>
        <begin position="1"/>
        <end position="30"/>
    </location>
</feature>
<feature type="chain" id="PRO_0000007986" description="Endo-1,4-beta-xylanase A">
    <location>
        <begin position="31"/>
        <end position="1059"/>
    </location>
</feature>
<feature type="domain" description="GH10" evidence="3">
    <location>
        <begin position="364"/>
        <end position="692"/>
    </location>
</feature>
<feature type="domain" description="CBM-cenC 1">
    <location>
        <begin position="700"/>
        <end position="870"/>
    </location>
</feature>
<feature type="domain" description="CBM-cenC 2">
    <location>
        <begin position="871"/>
        <end position="1059"/>
    </location>
</feature>
<feature type="region of interest" description="A-1">
    <location>
        <begin position="47"/>
        <end position="199"/>
    </location>
</feature>
<feature type="region of interest" description="A-2">
    <location>
        <begin position="200"/>
        <end position="354"/>
    </location>
</feature>
<feature type="active site" description="Proton donor" evidence="1">
    <location>
        <position position="502"/>
    </location>
</feature>
<feature type="active site" description="Nucleophile" evidence="4">
    <location>
        <position position="608"/>
    </location>
</feature>
<feature type="strand" evidence="6">
    <location>
        <begin position="872"/>
        <end position="877"/>
    </location>
</feature>
<feature type="strand" evidence="6">
    <location>
        <begin position="882"/>
        <end position="885"/>
    </location>
</feature>
<feature type="helix" evidence="6">
    <location>
        <begin position="888"/>
        <end position="892"/>
    </location>
</feature>
<feature type="strand" evidence="6">
    <location>
        <begin position="895"/>
        <end position="897"/>
    </location>
</feature>
<feature type="strand" evidence="6">
    <location>
        <begin position="900"/>
        <end position="904"/>
    </location>
</feature>
<feature type="turn" evidence="6">
    <location>
        <begin position="906"/>
        <end position="908"/>
    </location>
</feature>
<feature type="strand" evidence="6">
    <location>
        <begin position="911"/>
        <end position="918"/>
    </location>
</feature>
<feature type="strand" evidence="6">
    <location>
        <begin position="920"/>
        <end position="930"/>
    </location>
</feature>
<feature type="strand" evidence="6">
    <location>
        <begin position="938"/>
        <end position="940"/>
    </location>
</feature>
<feature type="helix" evidence="6">
    <location>
        <begin position="941"/>
        <end position="943"/>
    </location>
</feature>
<feature type="strand" evidence="6">
    <location>
        <begin position="944"/>
        <end position="952"/>
    </location>
</feature>
<feature type="strand" evidence="6">
    <location>
        <begin position="965"/>
        <end position="971"/>
    </location>
</feature>
<feature type="strand" evidence="6">
    <location>
        <begin position="976"/>
        <end position="978"/>
    </location>
</feature>
<feature type="helix" evidence="6">
    <location>
        <begin position="984"/>
        <end position="986"/>
    </location>
</feature>
<feature type="strand" evidence="6">
    <location>
        <begin position="987"/>
        <end position="994"/>
    </location>
</feature>
<feature type="strand" evidence="6">
    <location>
        <begin position="997"/>
        <end position="1005"/>
    </location>
</feature>
<feature type="strand" evidence="6">
    <location>
        <begin position="1015"/>
        <end position="1026"/>
    </location>
</feature>
<feature type="strand" evidence="6">
    <location>
        <begin position="1032"/>
        <end position="1039"/>
    </location>
</feature>
<feature type="strand" evidence="6">
    <location>
        <begin position="1041"/>
        <end position="1043"/>
    </location>
</feature>
<feature type="turn" evidence="6">
    <location>
        <begin position="1045"/>
        <end position="1047"/>
    </location>
</feature>
<feature type="helix" evidence="6">
    <location>
        <begin position="1049"/>
        <end position="1051"/>
    </location>
</feature>
<feature type="strand" evidence="6">
    <location>
        <begin position="1052"/>
        <end position="1058"/>
    </location>
</feature>
<reference key="1">
    <citation type="journal article" date="1995" name="Mol. Microbiol.">
        <title>Identification of a novel cellulose-binding domain within the multidomain 120 kDa xylanase XynA of the hyperthermophilic bacterium Thermotoga maritima.</title>
        <authorList>
            <person name="Winterhalter C."/>
            <person name="Heinrich P."/>
            <person name="Candussio A."/>
            <person name="Wich G."/>
            <person name="Liebl W."/>
        </authorList>
    </citation>
    <scope>NUCLEOTIDE SEQUENCE [GENOMIC DNA]</scope>
    <source>
        <strain>ATCC 43589 / DSM 3109 / JCM 10099 / NBRC 100826 / MSB8</strain>
    </source>
</reference>
<reference key="2">
    <citation type="journal article" date="1999" name="Nature">
        <title>Evidence for lateral gene transfer between Archaea and Bacteria from genome sequence of Thermotoga maritima.</title>
        <authorList>
            <person name="Nelson K.E."/>
            <person name="Clayton R.A."/>
            <person name="Gill S.R."/>
            <person name="Gwinn M.L."/>
            <person name="Dodson R.J."/>
            <person name="Haft D.H."/>
            <person name="Hickey E.K."/>
            <person name="Peterson J.D."/>
            <person name="Nelson W.C."/>
            <person name="Ketchum K.A."/>
            <person name="McDonald L.A."/>
            <person name="Utterback T.R."/>
            <person name="Malek J.A."/>
            <person name="Linher K.D."/>
            <person name="Garrett M.M."/>
            <person name="Stewart A.M."/>
            <person name="Cotton M.D."/>
            <person name="Pratt M.S."/>
            <person name="Phillips C.A."/>
            <person name="Richardson D.L."/>
            <person name="Heidelberg J.F."/>
            <person name="Sutton G.G."/>
            <person name="Fleischmann R.D."/>
            <person name="Eisen J.A."/>
            <person name="White O."/>
            <person name="Salzberg S.L."/>
            <person name="Smith H.O."/>
            <person name="Venter J.C."/>
            <person name="Fraser C.M."/>
        </authorList>
    </citation>
    <scope>NUCLEOTIDE SEQUENCE [LARGE SCALE GENOMIC DNA]</scope>
    <source>
        <strain>ATCC 43589 / DSM 3109 / JCM 10099 / NBRC 100826 / MSB8</strain>
    </source>
</reference>
<gene>
    <name type="primary">xynA</name>
    <name type="ordered locus">TM_0061</name>
</gene>
<accession>Q60037</accession>
<proteinExistence type="evidence at protein level"/>
<protein>
    <recommendedName>
        <fullName>Endo-1,4-beta-xylanase A</fullName>
        <shortName>Xylanase A</shortName>
        <ecNumber>3.2.1.8</ecNumber>
    </recommendedName>
    <alternativeName>
        <fullName>1,4-beta-D-xylan xylanohydrolase A</fullName>
    </alternativeName>
</protein>
<dbReference type="EC" id="3.2.1.8"/>
<dbReference type="EMBL" id="Z46264">
    <property type="protein sequence ID" value="CAA86406.1"/>
    <property type="molecule type" value="Genomic_DNA"/>
</dbReference>
<dbReference type="EMBL" id="AE000512">
    <property type="protein sequence ID" value="AAD35155.1"/>
    <property type="molecule type" value="Genomic_DNA"/>
</dbReference>
<dbReference type="PIR" id="S61311">
    <property type="entry name" value="S61311"/>
</dbReference>
<dbReference type="RefSeq" id="NP_227877.1">
    <property type="nucleotide sequence ID" value="NC_000853.1"/>
</dbReference>
<dbReference type="RefSeq" id="WP_004082550.1">
    <property type="nucleotide sequence ID" value="NC_000853.1"/>
</dbReference>
<dbReference type="PDB" id="1I82">
    <property type="method" value="X-ray"/>
    <property type="resolution" value="1.90 A"/>
    <property type="chains" value="A=871-1059"/>
</dbReference>
<dbReference type="PDB" id="1I8A">
    <property type="method" value="X-ray"/>
    <property type="resolution" value="1.90 A"/>
    <property type="chains" value="A=871-1059"/>
</dbReference>
<dbReference type="PDB" id="1I8U">
    <property type="method" value="X-ray"/>
    <property type="resolution" value="1.90 A"/>
    <property type="chains" value="A=871-1059"/>
</dbReference>
<dbReference type="PDBsum" id="1I82"/>
<dbReference type="PDBsum" id="1I8A"/>
<dbReference type="PDBsum" id="1I8U"/>
<dbReference type="SMR" id="Q60037"/>
<dbReference type="STRING" id="243274.TM_0061"/>
<dbReference type="DrugBank" id="DB02379">
    <property type="generic name" value="Beta-D-Glucose"/>
</dbReference>
<dbReference type="CAZy" id="CBM22">
    <property type="family name" value="Carbohydrate-Binding Module Family 22"/>
</dbReference>
<dbReference type="CAZy" id="CBM9">
    <property type="family name" value="Carbohydrate-Binding Module Family 9"/>
</dbReference>
<dbReference type="CAZy" id="GH10">
    <property type="family name" value="Glycoside Hydrolase Family 10"/>
</dbReference>
<dbReference type="PaxDb" id="243274-THEMA_04500"/>
<dbReference type="EnsemblBacteria" id="AAD35155">
    <property type="protein sequence ID" value="AAD35155"/>
    <property type="gene ID" value="TM_0061"/>
</dbReference>
<dbReference type="KEGG" id="tma:TM0061"/>
<dbReference type="KEGG" id="tmi:THEMA_04500"/>
<dbReference type="KEGG" id="tmm:Tmari_0058"/>
<dbReference type="KEGG" id="tmw:THMA_0057"/>
<dbReference type="eggNOG" id="COG3693">
    <property type="taxonomic scope" value="Bacteria"/>
</dbReference>
<dbReference type="InParanoid" id="Q60037"/>
<dbReference type="OrthoDB" id="9809277at2"/>
<dbReference type="BioCyc" id="MetaCyc:MONOMER-16897"/>
<dbReference type="BRENDA" id="3.2.1.8">
    <property type="organism ID" value="6331"/>
</dbReference>
<dbReference type="EvolutionaryTrace" id="Q60037"/>
<dbReference type="Proteomes" id="UP000008183">
    <property type="component" value="Chromosome"/>
</dbReference>
<dbReference type="GO" id="GO:0030246">
    <property type="term" value="F:carbohydrate binding"/>
    <property type="evidence" value="ECO:0007669"/>
    <property type="project" value="InterPro"/>
</dbReference>
<dbReference type="GO" id="GO:0031176">
    <property type="term" value="F:endo-1,4-beta-xylanase activity"/>
    <property type="evidence" value="ECO:0007669"/>
    <property type="project" value="UniProtKB-EC"/>
</dbReference>
<dbReference type="GO" id="GO:0045493">
    <property type="term" value="P:xylan catabolic process"/>
    <property type="evidence" value="ECO:0007669"/>
    <property type="project" value="UniProtKB-KW"/>
</dbReference>
<dbReference type="CDD" id="cd00005">
    <property type="entry name" value="CBM9_like_1"/>
    <property type="match status" value="1"/>
</dbReference>
<dbReference type="CDD" id="cd00241">
    <property type="entry name" value="DOMON_like"/>
    <property type="match status" value="1"/>
</dbReference>
<dbReference type="Gene3D" id="2.60.40.1190">
    <property type="match status" value="2"/>
</dbReference>
<dbReference type="Gene3D" id="2.60.120.260">
    <property type="entry name" value="Galactose-binding domain-like"/>
    <property type="match status" value="2"/>
</dbReference>
<dbReference type="Gene3D" id="3.20.20.80">
    <property type="entry name" value="Glycosidases"/>
    <property type="match status" value="1"/>
</dbReference>
<dbReference type="InterPro" id="IPR010502">
    <property type="entry name" value="Carb-bd_dom_fam9"/>
</dbReference>
<dbReference type="InterPro" id="IPR003305">
    <property type="entry name" value="CenC_carb-bd"/>
</dbReference>
<dbReference type="InterPro" id="IPR008979">
    <property type="entry name" value="Galactose-bd-like_sf"/>
</dbReference>
<dbReference type="InterPro" id="IPR044846">
    <property type="entry name" value="GH10"/>
</dbReference>
<dbReference type="InterPro" id="IPR031158">
    <property type="entry name" value="GH10_AS"/>
</dbReference>
<dbReference type="InterPro" id="IPR001000">
    <property type="entry name" value="GH10_dom"/>
</dbReference>
<dbReference type="InterPro" id="IPR017853">
    <property type="entry name" value="Glycoside_hydrolase_SF"/>
</dbReference>
<dbReference type="PANTHER" id="PTHR31490:SF90">
    <property type="entry name" value="ENDO-1,4-BETA-XYLANASE A"/>
    <property type="match status" value="1"/>
</dbReference>
<dbReference type="PANTHER" id="PTHR31490">
    <property type="entry name" value="GLYCOSYL HYDROLASE"/>
    <property type="match status" value="1"/>
</dbReference>
<dbReference type="Pfam" id="PF06452">
    <property type="entry name" value="CBM9_1"/>
    <property type="match status" value="2"/>
</dbReference>
<dbReference type="Pfam" id="PF02018">
    <property type="entry name" value="CBM_4_9"/>
    <property type="match status" value="2"/>
</dbReference>
<dbReference type="Pfam" id="PF00331">
    <property type="entry name" value="Glyco_hydro_10"/>
    <property type="match status" value="1"/>
</dbReference>
<dbReference type="PRINTS" id="PR00134">
    <property type="entry name" value="GLHYDRLASE10"/>
</dbReference>
<dbReference type="SMART" id="SM00633">
    <property type="entry name" value="Glyco_10"/>
    <property type="match status" value="1"/>
</dbReference>
<dbReference type="SUPFAM" id="SSF51445">
    <property type="entry name" value="(Trans)glycosidases"/>
    <property type="match status" value="1"/>
</dbReference>
<dbReference type="SUPFAM" id="SSF49344">
    <property type="entry name" value="CBD9-like"/>
    <property type="match status" value="2"/>
</dbReference>
<dbReference type="SUPFAM" id="SSF49785">
    <property type="entry name" value="Galactose-binding domain-like"/>
    <property type="match status" value="2"/>
</dbReference>
<dbReference type="PROSITE" id="PS00591">
    <property type="entry name" value="GH10_1"/>
    <property type="match status" value="1"/>
</dbReference>
<dbReference type="PROSITE" id="PS51760">
    <property type="entry name" value="GH10_2"/>
    <property type="match status" value="1"/>
</dbReference>